<reference key="1">
    <citation type="journal article" date="2004" name="Genome Res.">
        <title>The status, quality, and expansion of the NIH full-length cDNA project: the Mammalian Gene Collection (MGC).</title>
        <authorList>
            <consortium name="The MGC Project Team"/>
        </authorList>
    </citation>
    <scope>NUCLEOTIDE SEQUENCE [LARGE SCALE MRNA]</scope>
    <source>
        <tissue>Prostate</tissue>
    </source>
</reference>
<feature type="chain" id="PRO_0000327236" description="Replication termination factor 2">
    <location>
        <begin position="1"/>
        <end position="306"/>
    </location>
</feature>
<feature type="region of interest" description="Disordered" evidence="2">
    <location>
        <begin position="192"/>
        <end position="306"/>
    </location>
</feature>
<feature type="compositionally biased region" description="Basic and acidic residues" evidence="2">
    <location>
        <begin position="226"/>
        <end position="240"/>
    </location>
</feature>
<feature type="modified residue" description="Phosphoserine" evidence="1">
    <location>
        <position position="287"/>
    </location>
</feature>
<sequence length="306" mass="33812">MGCDGGTIPKRHELVKGPKKVEKVDKDAELVAQWNYCTLSQEVLRRPIVACELGRLYNKDAVIEFLLDKSAEKALGKATSHIRSIKNVTELKLSDNPAWEGDKGNTKGDKHDDLQRARFICPVVGLEMNGRHRFCFLRCCGCVFSERALKEIKAEVCHTCGAAFQEEDIIVLNGTKEDVEMLKRRMEERRLRAKLEKKTKKPKTAESASKLGISQDSAGPSKAKAGKSEEADPDPREKKSSLAPRGTASNGSASGKVGKPPCGALKRSIADSEESETYKSIFTSHSSAKRSKEESAHWVTHTSYCF</sequence>
<proteinExistence type="evidence at transcript level"/>
<organism>
    <name type="scientific">Rattus norvegicus</name>
    <name type="common">Rat</name>
    <dbReference type="NCBI Taxonomy" id="10116"/>
    <lineage>
        <taxon>Eukaryota</taxon>
        <taxon>Metazoa</taxon>
        <taxon>Chordata</taxon>
        <taxon>Craniata</taxon>
        <taxon>Vertebrata</taxon>
        <taxon>Euteleostomi</taxon>
        <taxon>Mammalia</taxon>
        <taxon>Eutheria</taxon>
        <taxon>Euarchontoglires</taxon>
        <taxon>Glires</taxon>
        <taxon>Rodentia</taxon>
        <taxon>Myomorpha</taxon>
        <taxon>Muroidea</taxon>
        <taxon>Muridae</taxon>
        <taxon>Murinae</taxon>
        <taxon>Rattus</taxon>
    </lineage>
</organism>
<gene>
    <name evidence="4" type="primary">Rtf2</name>
    <name type="synonym">Rtfdc1</name>
</gene>
<name>RTF2_RAT</name>
<protein>
    <recommendedName>
        <fullName evidence="3">Replication termination factor 2</fullName>
        <shortName>RTF2</shortName>
    </recommendedName>
    <alternativeName>
        <fullName>Replication termination factor 2 domain-containing protein 1</fullName>
    </alternativeName>
</protein>
<comment type="function">
    <text evidence="1">Replication termination factor which is a component of the elongating replisome. Required for ATR pathway signaling upon DNA damage and has a positive activity during DNA replication. Might function to facilitate fork pausing at replication fork barriers like the rDNA. May be globally required to stimulate ATR signaling after the fork stalls or encounters a lesion. Interacts with nascent DNA.</text>
</comment>
<comment type="subunit">
    <text evidence="1">Interacts with DDI2; probably also interacts with DDI1.</text>
</comment>
<comment type="subcellular location">
    <subcellularLocation>
        <location evidence="1">Chromosome</location>
    </subcellularLocation>
    <text evidence="1">Localizes at the replication fork.</text>
</comment>
<comment type="PTM">
    <text evidence="1">Undergoes proteasomal degradation, via DDI1 and DDI2. Removal from stalled replisomes and degradation are required for genome stability.</text>
</comment>
<comment type="similarity">
    <text evidence="3">Belongs to the rtf2 family.</text>
</comment>
<evidence type="ECO:0000250" key="1">
    <source>
        <dbReference type="UniProtKB" id="Q9BY42"/>
    </source>
</evidence>
<evidence type="ECO:0000256" key="2">
    <source>
        <dbReference type="SAM" id="MobiDB-lite"/>
    </source>
</evidence>
<evidence type="ECO:0000305" key="3"/>
<evidence type="ECO:0000312" key="4">
    <source>
        <dbReference type="RGD" id="1311072"/>
    </source>
</evidence>
<dbReference type="EMBL" id="BC101880">
    <property type="protein sequence ID" value="AAI01881.1"/>
    <property type="molecule type" value="mRNA"/>
</dbReference>
<dbReference type="RefSeq" id="NP_001029062.1">
    <property type="nucleotide sequence ID" value="NM_001033890.1"/>
</dbReference>
<dbReference type="FunCoup" id="Q3T1J8">
    <property type="interactions" value="4165"/>
</dbReference>
<dbReference type="STRING" id="10116.ENSRNOP00000006884"/>
<dbReference type="iPTMnet" id="Q3T1J8"/>
<dbReference type="PhosphoSitePlus" id="Q3T1J8"/>
<dbReference type="jPOST" id="Q3T1J8"/>
<dbReference type="PaxDb" id="10116-ENSRNOP00000006884"/>
<dbReference type="Ensembl" id="ENSRNOT00000117578.1">
    <property type="protein sequence ID" value="ENSRNOP00000092936.1"/>
    <property type="gene ID" value="ENSRNOG00000005083.6"/>
</dbReference>
<dbReference type="GeneID" id="296410"/>
<dbReference type="KEGG" id="rno:296410"/>
<dbReference type="AGR" id="RGD:1311072"/>
<dbReference type="CTD" id="296410"/>
<dbReference type="RGD" id="1311072">
    <property type="gene designation" value="Rtf2"/>
</dbReference>
<dbReference type="eggNOG" id="KOG3113">
    <property type="taxonomic scope" value="Eukaryota"/>
</dbReference>
<dbReference type="GeneTree" id="ENSGT00390000010923"/>
<dbReference type="HOGENOM" id="CLU_048955_1_0_1"/>
<dbReference type="InParanoid" id="Q3T1J8"/>
<dbReference type="OMA" id="EFRWLHC"/>
<dbReference type="OrthoDB" id="247013at2759"/>
<dbReference type="PhylomeDB" id="Q3T1J8"/>
<dbReference type="TreeFam" id="TF314621"/>
<dbReference type="PRO" id="PR:Q3T1J8"/>
<dbReference type="Proteomes" id="UP000002494">
    <property type="component" value="Chromosome 3"/>
</dbReference>
<dbReference type="Bgee" id="ENSRNOG00000005083">
    <property type="expression patterns" value="Expressed in thymus and 20 other cell types or tissues"/>
</dbReference>
<dbReference type="GO" id="GO:0005634">
    <property type="term" value="C:nucleus"/>
    <property type="evidence" value="ECO:0000318"/>
    <property type="project" value="GO_Central"/>
</dbReference>
<dbReference type="GO" id="GO:0005657">
    <property type="term" value="C:replication fork"/>
    <property type="evidence" value="ECO:0000250"/>
    <property type="project" value="UniProtKB"/>
</dbReference>
<dbReference type="GO" id="GO:0003677">
    <property type="term" value="F:DNA binding"/>
    <property type="evidence" value="ECO:0000250"/>
    <property type="project" value="UniProtKB"/>
</dbReference>
<dbReference type="GO" id="GO:0072711">
    <property type="term" value="P:cellular response to hydroxyurea"/>
    <property type="evidence" value="ECO:0000250"/>
    <property type="project" value="UniProtKB"/>
</dbReference>
<dbReference type="GO" id="GO:1902979">
    <property type="term" value="P:mitotic DNA replication termination"/>
    <property type="evidence" value="ECO:0007669"/>
    <property type="project" value="InterPro"/>
</dbReference>
<dbReference type="GO" id="GO:0097752">
    <property type="term" value="P:regulation of DNA stability"/>
    <property type="evidence" value="ECO:0000250"/>
    <property type="project" value="UniProtKB"/>
</dbReference>
<dbReference type="CDD" id="cd16653">
    <property type="entry name" value="RING-like_Rtf2"/>
    <property type="match status" value="1"/>
</dbReference>
<dbReference type="InterPro" id="IPR006735">
    <property type="entry name" value="Rtf2"/>
</dbReference>
<dbReference type="InterPro" id="IPR027799">
    <property type="entry name" value="Rtf2_RING-finger"/>
</dbReference>
<dbReference type="PANTHER" id="PTHR12775">
    <property type="entry name" value="PROTEIN C20ORF43 HOMOLOG"/>
    <property type="match status" value="1"/>
</dbReference>
<dbReference type="PANTHER" id="PTHR12775:SF0">
    <property type="entry name" value="REPLICATION TERMINATION FACTOR 2"/>
    <property type="match status" value="1"/>
</dbReference>
<dbReference type="Pfam" id="PF04641">
    <property type="entry name" value="Rtf2"/>
    <property type="match status" value="1"/>
</dbReference>
<accession>Q3T1J8</accession>
<keyword id="KW-0158">Chromosome</keyword>
<keyword id="KW-0597">Phosphoprotein</keyword>
<keyword id="KW-1185">Reference proteome</keyword>